<reference key="1">
    <citation type="journal article" date="2006" name="BMC Genomics">
        <title>Complete genome sequence of Shigella flexneri 5b and comparison with Shigella flexneri 2a.</title>
        <authorList>
            <person name="Nie H."/>
            <person name="Yang F."/>
            <person name="Zhang X."/>
            <person name="Yang J."/>
            <person name="Chen L."/>
            <person name="Wang J."/>
            <person name="Xiong Z."/>
            <person name="Peng J."/>
            <person name="Sun L."/>
            <person name="Dong J."/>
            <person name="Xue Y."/>
            <person name="Xu X."/>
            <person name="Chen S."/>
            <person name="Yao Z."/>
            <person name="Shen Y."/>
            <person name="Jin Q."/>
        </authorList>
    </citation>
    <scope>NUCLEOTIDE SEQUENCE [LARGE SCALE GENOMIC DNA]</scope>
    <source>
        <strain>8401</strain>
    </source>
</reference>
<sequence length="350" mass="39735">MPVLHNRISNDALKAKMLAESEPRTTISFYKYFHIADPKATRDALYQLFTALNVFGRVYLAHEGINAQISVPASNVETFRAQLYAFDPALEGLRLNIALDDDGKSFWVLRMKVRDRIVADGIDDPHFDASNVGEYLQAAEVNAMLDDPDALFIDMRNHYEYEVGHFENALEIPADTFREQLPKAVEMMQAHKDKKIVMYCTGGIRCEKASAWMKHNGFNKVWHIEGGIIEYARKAREQGLPVRFIGKNFVFDERMGERISDEIIAHCHQCGAPCDSHTNCKNDGCHLLFIQCPVCAEKYKGCCSEICCEESALPPEEQRRRRAGRENGNKIFNKSRGRLNTTLGIPDPTE</sequence>
<accession>Q0T5X6</accession>
<keyword id="KW-0560">Oxidoreductase</keyword>
<keyword id="KW-0819">tRNA processing</keyword>
<dbReference type="EC" id="1.14.-.-" evidence="1"/>
<dbReference type="EMBL" id="CP000266">
    <property type="protein sequence ID" value="ABF03289.1"/>
    <property type="molecule type" value="Genomic_DNA"/>
</dbReference>
<dbReference type="RefSeq" id="WP_001144616.1">
    <property type="nucleotide sequence ID" value="NC_008258.1"/>
</dbReference>
<dbReference type="SMR" id="Q0T5X6"/>
<dbReference type="KEGG" id="sfv:SFV_1078"/>
<dbReference type="HOGENOM" id="CLU_038878_1_1_6"/>
<dbReference type="Proteomes" id="UP000000659">
    <property type="component" value="Chromosome"/>
</dbReference>
<dbReference type="GO" id="GO:0016705">
    <property type="term" value="F:oxidoreductase activity, acting on paired donors, with incorporation or reduction of molecular oxygen"/>
    <property type="evidence" value="ECO:0007669"/>
    <property type="project" value="UniProtKB-UniRule"/>
</dbReference>
<dbReference type="GO" id="GO:0006400">
    <property type="term" value="P:tRNA modification"/>
    <property type="evidence" value="ECO:0007669"/>
    <property type="project" value="UniProtKB-UniRule"/>
</dbReference>
<dbReference type="CDD" id="cd01518">
    <property type="entry name" value="RHOD_YceA"/>
    <property type="match status" value="1"/>
</dbReference>
<dbReference type="Gene3D" id="3.30.70.100">
    <property type="match status" value="1"/>
</dbReference>
<dbReference type="Gene3D" id="3.40.250.10">
    <property type="entry name" value="Rhodanese-like domain"/>
    <property type="match status" value="1"/>
</dbReference>
<dbReference type="HAMAP" id="MF_00469">
    <property type="entry name" value="TrhO"/>
    <property type="match status" value="1"/>
</dbReference>
<dbReference type="InterPro" id="IPR001763">
    <property type="entry name" value="Rhodanese-like_dom"/>
</dbReference>
<dbReference type="InterPro" id="IPR036873">
    <property type="entry name" value="Rhodanese-like_dom_sf"/>
</dbReference>
<dbReference type="InterPro" id="IPR022111">
    <property type="entry name" value="Rhodanese_C"/>
</dbReference>
<dbReference type="InterPro" id="IPR020936">
    <property type="entry name" value="TrhO"/>
</dbReference>
<dbReference type="InterPro" id="IPR040503">
    <property type="entry name" value="TRHO_N"/>
</dbReference>
<dbReference type="NCBIfam" id="NF001133">
    <property type="entry name" value="PRK00142.1-1"/>
    <property type="match status" value="1"/>
</dbReference>
<dbReference type="PANTHER" id="PTHR43846:SF1">
    <property type="entry name" value="TRNA URIDINE(34) HYDROXYLASE"/>
    <property type="match status" value="1"/>
</dbReference>
<dbReference type="PANTHER" id="PTHR43846">
    <property type="entry name" value="UPF0176 PROTEIN YCEA"/>
    <property type="match status" value="1"/>
</dbReference>
<dbReference type="Pfam" id="PF00581">
    <property type="entry name" value="Rhodanese"/>
    <property type="match status" value="1"/>
</dbReference>
<dbReference type="Pfam" id="PF12368">
    <property type="entry name" value="Rhodanese_C"/>
    <property type="match status" value="1"/>
</dbReference>
<dbReference type="Pfam" id="PF17773">
    <property type="entry name" value="UPF0176_N"/>
    <property type="match status" value="1"/>
</dbReference>
<dbReference type="SMART" id="SM00450">
    <property type="entry name" value="RHOD"/>
    <property type="match status" value="1"/>
</dbReference>
<dbReference type="SUPFAM" id="SSF52821">
    <property type="entry name" value="Rhodanese/Cell cycle control phosphatase"/>
    <property type="match status" value="1"/>
</dbReference>
<dbReference type="PROSITE" id="PS50206">
    <property type="entry name" value="RHODANESE_3"/>
    <property type="match status" value="1"/>
</dbReference>
<evidence type="ECO:0000255" key="1">
    <source>
        <dbReference type="HAMAP-Rule" id="MF_00469"/>
    </source>
</evidence>
<gene>
    <name evidence="1" type="primary">trhO</name>
    <name type="synonym">yceA</name>
    <name type="ordered locus">SFV_1078</name>
</gene>
<name>TRHO_SHIF8</name>
<feature type="chain" id="PRO_1000013778" description="tRNA uridine(34) hydroxylase">
    <location>
        <begin position="1"/>
        <end position="350"/>
    </location>
</feature>
<feature type="domain" description="Rhodanese" evidence="1">
    <location>
        <begin position="146"/>
        <end position="240"/>
    </location>
</feature>
<feature type="active site" description="Cysteine persulfide intermediate" evidence="1">
    <location>
        <position position="200"/>
    </location>
</feature>
<proteinExistence type="inferred from homology"/>
<comment type="function">
    <text evidence="1">Catalyzes oxygen-dependent 5-hydroxyuridine (ho5U) modification at position 34 in tRNAs.</text>
</comment>
<comment type="catalytic activity">
    <reaction evidence="1">
        <text>uridine(34) in tRNA + AH2 + O2 = 5-hydroxyuridine(34) in tRNA + A + H2O</text>
        <dbReference type="Rhea" id="RHEA:64224"/>
        <dbReference type="Rhea" id="RHEA-COMP:11727"/>
        <dbReference type="Rhea" id="RHEA-COMP:13381"/>
        <dbReference type="ChEBI" id="CHEBI:13193"/>
        <dbReference type="ChEBI" id="CHEBI:15377"/>
        <dbReference type="ChEBI" id="CHEBI:15379"/>
        <dbReference type="ChEBI" id="CHEBI:17499"/>
        <dbReference type="ChEBI" id="CHEBI:65315"/>
        <dbReference type="ChEBI" id="CHEBI:136877"/>
    </reaction>
</comment>
<comment type="similarity">
    <text evidence="1">Belongs to the TrhO family.</text>
</comment>
<organism>
    <name type="scientific">Shigella flexneri serotype 5b (strain 8401)</name>
    <dbReference type="NCBI Taxonomy" id="373384"/>
    <lineage>
        <taxon>Bacteria</taxon>
        <taxon>Pseudomonadati</taxon>
        <taxon>Pseudomonadota</taxon>
        <taxon>Gammaproteobacteria</taxon>
        <taxon>Enterobacterales</taxon>
        <taxon>Enterobacteriaceae</taxon>
        <taxon>Shigella</taxon>
    </lineage>
</organism>
<protein>
    <recommendedName>
        <fullName evidence="1">tRNA uridine(34) hydroxylase</fullName>
        <ecNumber evidence="1">1.14.-.-</ecNumber>
    </recommendedName>
    <alternativeName>
        <fullName evidence="1">tRNA hydroxylation protein O</fullName>
    </alternativeName>
</protein>